<feature type="chain" id="PRO_0000080464" description="Cyclin-F">
    <location>
        <begin position="1"/>
        <end position="777"/>
    </location>
</feature>
<feature type="domain" description="F-box" evidence="3">
    <location>
        <begin position="29"/>
        <end position="76"/>
    </location>
</feature>
<feature type="domain" description="Cyclin N-terminal" evidence="2">
    <location>
        <begin position="288"/>
        <end position="405"/>
    </location>
</feature>
<feature type="region of interest" description="Disordered" evidence="4">
    <location>
        <begin position="544"/>
        <end position="591"/>
    </location>
</feature>
<feature type="region of interest" description="PEST">
    <location>
        <begin position="582"/>
        <end position="761"/>
    </location>
</feature>
<feature type="region of interest" description="Disordered" evidence="4">
    <location>
        <begin position="651"/>
        <end position="777"/>
    </location>
</feature>
<feature type="short sequence motif" description="Nuclear localization signal 1" evidence="1">
    <location>
        <begin position="20"/>
        <end position="28"/>
    </location>
</feature>
<feature type="short sequence motif" description="D box 1" evidence="1">
    <location>
        <begin position="310"/>
        <end position="313"/>
    </location>
</feature>
<feature type="short sequence motif" description="D box 2" evidence="1">
    <location>
        <begin position="343"/>
        <end position="346"/>
    </location>
</feature>
<feature type="short sequence motif" description="D box 3" evidence="1">
    <location>
        <begin position="349"/>
        <end position="352"/>
    </location>
</feature>
<feature type="short sequence motif" description="Nuclear localization signal 2" evidence="1">
    <location>
        <begin position="568"/>
        <end position="574"/>
    </location>
</feature>
<feature type="short sequence motif" description="D box 4" evidence="1">
    <location>
        <begin position="762"/>
        <end position="765"/>
    </location>
</feature>
<feature type="compositionally biased region" description="Low complexity" evidence="4">
    <location>
        <begin position="695"/>
        <end position="708"/>
    </location>
</feature>
<feature type="compositionally biased region" description="Low complexity" evidence="4">
    <location>
        <begin position="719"/>
        <end position="731"/>
    </location>
</feature>
<feature type="compositionally biased region" description="Polar residues" evidence="4">
    <location>
        <begin position="751"/>
        <end position="767"/>
    </location>
</feature>
<feature type="compositionally biased region" description="Basic and acidic residues" evidence="4">
    <location>
        <begin position="768"/>
        <end position="777"/>
    </location>
</feature>
<feature type="splice variant" id="VSP_001257" description="In isoform 2." evidence="9">
    <original>G</original>
    <variation>GGECWRDGVGDRSYGTEAGGAWTRAPVTRECASHPPKHGV</variation>
    <location>
        <position position="5"/>
    </location>
</feature>
<feature type="splice variant" id="VSP_039778" description="In isoform 3." evidence="8">
    <location>
        <begin position="232"/>
        <end position="233"/>
    </location>
</feature>
<feature type="sequence conflict" description="In Ref. 2; AAA62317/AAA63152." evidence="10" ref="2">
    <original>L</original>
    <variation>P</variation>
    <location>
        <position position="81"/>
    </location>
</feature>
<feature type="sequence conflict" description="In Ref. 1; CAA87695." evidence="10" ref="1">
    <original>E</original>
    <variation>Q</variation>
    <location>
        <position position="92"/>
    </location>
</feature>
<feature type="sequence conflict" description="In Ref. 1; CAA87695." evidence="10" ref="1">
    <original>S</original>
    <variation>T</variation>
    <location>
        <position position="132"/>
    </location>
</feature>
<feature type="sequence conflict" description="In Ref. 3; BAC26886." evidence="10" ref="3">
    <original>L</original>
    <variation>H</variation>
    <location>
        <position position="247"/>
    </location>
</feature>
<feature type="sequence conflict" description="In Ref. 2; AAA62317/AAA63152." evidence="10" ref="2">
    <original>A</original>
    <variation>T</variation>
    <location>
        <position position="263"/>
    </location>
</feature>
<feature type="sequence conflict" description="In Ref. 2; AAA62317/AAA63152." evidence="10" ref="2">
    <original>S</original>
    <variation>T</variation>
    <location>
        <position position="290"/>
    </location>
</feature>
<feature type="sequence conflict" description="In Ref. 1; CAA87695." evidence="10" ref="1">
    <original>V</original>
    <variation>G</variation>
    <location>
        <position position="301"/>
    </location>
</feature>
<feature type="sequence conflict" description="In Ref. 2; AAA62317/AAA63152." evidence="10" ref="2">
    <original>T</original>
    <variation>S</variation>
    <location>
        <position position="364"/>
    </location>
</feature>
<feature type="sequence conflict" description="In Ref. 1; CAA87695." evidence="10" ref="1">
    <original>S</original>
    <variation>A</variation>
    <location>
        <position position="454"/>
    </location>
</feature>
<feature type="sequence conflict" description="In Ref. 2; AAA62317/AAA63152." evidence="10" ref="2">
    <original>H</original>
    <variation>R</variation>
    <location>
        <position position="464"/>
    </location>
</feature>
<feature type="sequence conflict" description="In Ref. 1; CAA87695, 2; AAA62317/AAA63152 and 5; AAH37662." evidence="10" ref="1 2 5">
    <original>V</original>
    <variation>I</variation>
    <location>
        <position position="508"/>
    </location>
</feature>
<feature type="sequence conflict" description="In Ref. 1; CAA87695." evidence="10" ref="1">
    <original>R</original>
    <variation>Q</variation>
    <location>
        <position position="527"/>
    </location>
</feature>
<feature type="sequence conflict" description="In Ref. 1; CAA87695, 2; AAA62317/AAA63152 and 5; AAH37662." evidence="10" ref="1 2 5">
    <original>T</original>
    <variation>A</variation>
    <location>
        <position position="539"/>
    </location>
</feature>
<feature type="sequence conflict" description="In Ref. 2; AAA62317/AAA63152." evidence="10" ref="2">
    <original>G</original>
    <variation>E</variation>
    <location>
        <position position="567"/>
    </location>
</feature>
<feature type="sequence conflict" description="In Ref. 1; CAA87695." evidence="10" ref="1">
    <original>RR</original>
    <variation>E</variation>
    <location>
        <begin position="568"/>
        <end position="569"/>
    </location>
</feature>
<feature type="sequence conflict" description="In Ref. 2; AAA62317/AAA63152." evidence="10" ref="2">
    <original>S</original>
    <variation>G</variation>
    <location>
        <position position="603"/>
    </location>
</feature>
<feature type="sequence conflict" description="In Ref. 2; AAA62317/AAA63152." evidence="10" ref="2">
    <original>E</original>
    <variation>R</variation>
    <location>
        <position position="624"/>
    </location>
</feature>
<feature type="sequence conflict" description="In Ref. 3; BAE41025." evidence="10" ref="3">
    <original>Q</original>
    <variation>K</variation>
    <location>
        <position position="757"/>
    </location>
</feature>
<feature type="sequence conflict" description="In Ref. 1; CAA87695, 2; AAA62317/AAA63152 and 5; AAH37662." evidence="10" ref="1 2 5">
    <original>M</original>
    <variation>T</variation>
    <location>
        <position position="773"/>
    </location>
</feature>
<name>CCNF_MOUSE</name>
<sequence>MGSGGVIHCRCAKCFCYPTKRRIKRRPRNLTILSLPEDVLFHILKWLSVGDILAVRAVHSHLKYLVDNHASVWASASFQELWPSPQNLKLFERAAEKGNFEAAVKLGIAYLYNEGLSVSDEACAEVNGLKASRFFSMAERLNTGSEPFIWLFIRPPWSVSGSCCKAVVHDSLRAECQLQRSHKASILHCLGRVLNLFEDEEKRKQARSLLEESSRQGCLISSYLLWESDRKVDMSDPGRCLHSFRKLRDYAAKGCWEAQLALAKACAGGSQLGLEGKACSESVCQLFQASQAVNKQQIFSVQKGLSDTMRYILIDWLVEVATMKDFTSLCLHLTVECVDRYLRRRLVPRYKLQLLGIACMVICTRFISKEILTIREAVWLTDNTYKYEDLVRVMGEIISALEGKIRIPTVVDYKEVLLTLVPVAPRTQHLCSFLCELTLLHTSLSIYAPARLASAALLLARLMHGQTQPWTTHLWDLTGFSYSDLVPCVLSLHKKCFHDDAPKDYRQVSLTAVKQRFEDKCYEEISREEVLSYADLCSTIGVKQESPEPPSFPSSGEIHTFLSSPSGRRSKRKRENSLQEDRGSFVTTPTAELSNQEETLLGSLLDWSLECCSGYEGDQESEGEKEGDVTAPSRLLDVTVVYLNPEEHCCQESSDEEAWPEDKIHPAPGTQAPPASAPRPLLCNRGDRAKDITTSGYSSVSSSSPISSLDGGMGGSPQSTSVLSVGSHSSTKPCHHQAKKSCLQCRPPNSPESGVHQQPVKRQNLSVHSDKDMHLAS</sequence>
<reference key="1">
    <citation type="journal article" date="1995" name="Mamm. Genome">
        <title>Mouse cyclin F maps to a conserved linkage group on mouse chromosome 17.</title>
        <authorList>
            <person name="Obermayr F.O."/>
            <person name="Sutherland H.F."/>
            <person name="Kraus B."/>
            <person name="Frischauf A.-M."/>
        </authorList>
    </citation>
    <scope>NUCLEOTIDE SEQUENCE [MRNA] (ISOFORM 1)</scope>
</reference>
<reference key="2">
    <citation type="submission" date="1995-03" db="EMBL/GenBank/DDBJ databases">
        <title>Expression of cyclin F at early stages of mouse embryonic brain development.</title>
        <authorList>
            <person name="Croci L."/>
            <person name="Stayton C.L."/>
            <person name="Bossolasco M."/>
            <person name="Bianchi E."/>
            <person name="Corradi A.M."/>
            <person name="Pardi R."/>
            <person name="Consalez G.G."/>
        </authorList>
    </citation>
    <scope>NUCLEOTIDE SEQUENCE [MRNA] (ISOFORMS 1 AND 2)</scope>
</reference>
<reference key="3">
    <citation type="journal article" date="2005" name="Science">
        <title>The transcriptional landscape of the mammalian genome.</title>
        <authorList>
            <person name="Carninci P."/>
            <person name="Kasukawa T."/>
            <person name="Katayama S."/>
            <person name="Gough J."/>
            <person name="Frith M.C."/>
            <person name="Maeda N."/>
            <person name="Oyama R."/>
            <person name="Ravasi T."/>
            <person name="Lenhard B."/>
            <person name="Wells C."/>
            <person name="Kodzius R."/>
            <person name="Shimokawa K."/>
            <person name="Bajic V.B."/>
            <person name="Brenner S.E."/>
            <person name="Batalov S."/>
            <person name="Forrest A.R."/>
            <person name="Zavolan M."/>
            <person name="Davis M.J."/>
            <person name="Wilming L.G."/>
            <person name="Aidinis V."/>
            <person name="Allen J.E."/>
            <person name="Ambesi-Impiombato A."/>
            <person name="Apweiler R."/>
            <person name="Aturaliya R.N."/>
            <person name="Bailey T.L."/>
            <person name="Bansal M."/>
            <person name="Baxter L."/>
            <person name="Beisel K.W."/>
            <person name="Bersano T."/>
            <person name="Bono H."/>
            <person name="Chalk A.M."/>
            <person name="Chiu K.P."/>
            <person name="Choudhary V."/>
            <person name="Christoffels A."/>
            <person name="Clutterbuck D.R."/>
            <person name="Crowe M.L."/>
            <person name="Dalla E."/>
            <person name="Dalrymple B.P."/>
            <person name="de Bono B."/>
            <person name="Della Gatta G."/>
            <person name="di Bernardo D."/>
            <person name="Down T."/>
            <person name="Engstrom P."/>
            <person name="Fagiolini M."/>
            <person name="Faulkner G."/>
            <person name="Fletcher C.F."/>
            <person name="Fukushima T."/>
            <person name="Furuno M."/>
            <person name="Futaki S."/>
            <person name="Gariboldi M."/>
            <person name="Georgii-Hemming P."/>
            <person name="Gingeras T.R."/>
            <person name="Gojobori T."/>
            <person name="Green R.E."/>
            <person name="Gustincich S."/>
            <person name="Harbers M."/>
            <person name="Hayashi Y."/>
            <person name="Hensch T.K."/>
            <person name="Hirokawa N."/>
            <person name="Hill D."/>
            <person name="Huminiecki L."/>
            <person name="Iacono M."/>
            <person name="Ikeo K."/>
            <person name="Iwama A."/>
            <person name="Ishikawa T."/>
            <person name="Jakt M."/>
            <person name="Kanapin A."/>
            <person name="Katoh M."/>
            <person name="Kawasawa Y."/>
            <person name="Kelso J."/>
            <person name="Kitamura H."/>
            <person name="Kitano H."/>
            <person name="Kollias G."/>
            <person name="Krishnan S.P."/>
            <person name="Kruger A."/>
            <person name="Kummerfeld S.K."/>
            <person name="Kurochkin I.V."/>
            <person name="Lareau L.F."/>
            <person name="Lazarevic D."/>
            <person name="Lipovich L."/>
            <person name="Liu J."/>
            <person name="Liuni S."/>
            <person name="McWilliam S."/>
            <person name="Madan Babu M."/>
            <person name="Madera M."/>
            <person name="Marchionni L."/>
            <person name="Matsuda H."/>
            <person name="Matsuzawa S."/>
            <person name="Miki H."/>
            <person name="Mignone F."/>
            <person name="Miyake S."/>
            <person name="Morris K."/>
            <person name="Mottagui-Tabar S."/>
            <person name="Mulder N."/>
            <person name="Nakano N."/>
            <person name="Nakauchi H."/>
            <person name="Ng P."/>
            <person name="Nilsson R."/>
            <person name="Nishiguchi S."/>
            <person name="Nishikawa S."/>
            <person name="Nori F."/>
            <person name="Ohara O."/>
            <person name="Okazaki Y."/>
            <person name="Orlando V."/>
            <person name="Pang K.C."/>
            <person name="Pavan W.J."/>
            <person name="Pavesi G."/>
            <person name="Pesole G."/>
            <person name="Petrovsky N."/>
            <person name="Piazza S."/>
            <person name="Reed J."/>
            <person name="Reid J.F."/>
            <person name="Ring B.Z."/>
            <person name="Ringwald M."/>
            <person name="Rost B."/>
            <person name="Ruan Y."/>
            <person name="Salzberg S.L."/>
            <person name="Sandelin A."/>
            <person name="Schneider C."/>
            <person name="Schoenbach C."/>
            <person name="Sekiguchi K."/>
            <person name="Semple C.A."/>
            <person name="Seno S."/>
            <person name="Sessa L."/>
            <person name="Sheng Y."/>
            <person name="Shibata Y."/>
            <person name="Shimada H."/>
            <person name="Shimada K."/>
            <person name="Silva D."/>
            <person name="Sinclair B."/>
            <person name="Sperling S."/>
            <person name="Stupka E."/>
            <person name="Sugiura K."/>
            <person name="Sultana R."/>
            <person name="Takenaka Y."/>
            <person name="Taki K."/>
            <person name="Tammoja K."/>
            <person name="Tan S.L."/>
            <person name="Tang S."/>
            <person name="Taylor M.S."/>
            <person name="Tegner J."/>
            <person name="Teichmann S.A."/>
            <person name="Ueda H.R."/>
            <person name="van Nimwegen E."/>
            <person name="Verardo R."/>
            <person name="Wei C.L."/>
            <person name="Yagi K."/>
            <person name="Yamanishi H."/>
            <person name="Zabarovsky E."/>
            <person name="Zhu S."/>
            <person name="Zimmer A."/>
            <person name="Hide W."/>
            <person name="Bult C."/>
            <person name="Grimmond S.M."/>
            <person name="Teasdale R.D."/>
            <person name="Liu E.T."/>
            <person name="Brusic V."/>
            <person name="Quackenbush J."/>
            <person name="Wahlestedt C."/>
            <person name="Mattick J.S."/>
            <person name="Hume D.A."/>
            <person name="Kai C."/>
            <person name="Sasaki D."/>
            <person name="Tomaru Y."/>
            <person name="Fukuda S."/>
            <person name="Kanamori-Katayama M."/>
            <person name="Suzuki M."/>
            <person name="Aoki J."/>
            <person name="Arakawa T."/>
            <person name="Iida J."/>
            <person name="Imamura K."/>
            <person name="Itoh M."/>
            <person name="Kato T."/>
            <person name="Kawaji H."/>
            <person name="Kawagashira N."/>
            <person name="Kawashima T."/>
            <person name="Kojima M."/>
            <person name="Kondo S."/>
            <person name="Konno H."/>
            <person name="Nakano K."/>
            <person name="Ninomiya N."/>
            <person name="Nishio T."/>
            <person name="Okada M."/>
            <person name="Plessy C."/>
            <person name="Shibata K."/>
            <person name="Shiraki T."/>
            <person name="Suzuki S."/>
            <person name="Tagami M."/>
            <person name="Waki K."/>
            <person name="Watahiki A."/>
            <person name="Okamura-Oho Y."/>
            <person name="Suzuki H."/>
            <person name="Kawai J."/>
            <person name="Hayashizaki Y."/>
        </authorList>
    </citation>
    <scope>NUCLEOTIDE SEQUENCE [LARGE SCALE MRNA] (ISOFORM 1)</scope>
    <source>
        <strain>C57BL/6J</strain>
        <tissue>Cerebellum</tissue>
        <tissue>Kidney</tissue>
        <tissue>Ovary</tissue>
        <tissue>Uterus</tissue>
    </source>
</reference>
<reference key="4">
    <citation type="journal article" date="2009" name="PLoS Biol.">
        <title>Lineage-specific biology revealed by a finished genome assembly of the mouse.</title>
        <authorList>
            <person name="Church D.M."/>
            <person name="Goodstadt L."/>
            <person name="Hillier L.W."/>
            <person name="Zody M.C."/>
            <person name="Goldstein S."/>
            <person name="She X."/>
            <person name="Bult C.J."/>
            <person name="Agarwala R."/>
            <person name="Cherry J.L."/>
            <person name="DiCuccio M."/>
            <person name="Hlavina W."/>
            <person name="Kapustin Y."/>
            <person name="Meric P."/>
            <person name="Maglott D."/>
            <person name="Birtle Z."/>
            <person name="Marques A.C."/>
            <person name="Graves T."/>
            <person name="Zhou S."/>
            <person name="Teague B."/>
            <person name="Potamousis K."/>
            <person name="Churas C."/>
            <person name="Place M."/>
            <person name="Herschleb J."/>
            <person name="Runnheim R."/>
            <person name="Forrest D."/>
            <person name="Amos-Landgraf J."/>
            <person name="Schwartz D.C."/>
            <person name="Cheng Z."/>
            <person name="Lindblad-Toh K."/>
            <person name="Eichler E.E."/>
            <person name="Ponting C.P."/>
        </authorList>
    </citation>
    <scope>NUCLEOTIDE SEQUENCE [LARGE SCALE GENOMIC DNA]</scope>
    <source>
        <strain>C57BL/6J</strain>
    </source>
</reference>
<reference key="5">
    <citation type="journal article" date="2004" name="Genome Res.">
        <title>The status, quality, and expansion of the NIH full-length cDNA project: the Mammalian Gene Collection (MGC).</title>
        <authorList>
            <consortium name="The MGC Project Team"/>
        </authorList>
    </citation>
    <scope>NUCLEOTIDE SEQUENCE [LARGE SCALE MRNA] (ISOFORM 3)</scope>
    <source>
        <strain>FVB/N</strain>
        <tissue>Mammary tumor</tissue>
    </source>
</reference>
<reference key="6">
    <citation type="journal article" date="2001" name="Proc. Natl. Acad. Sci. U.S.A.">
        <title>Increased levels of forkhead box M1B transcription factor in transgenic mouse hepatocytes prevent age-related proliferation defects in regenerating liver.</title>
        <authorList>
            <person name="Wang X."/>
            <person name="Quail E."/>
            <person name="Hung N.J."/>
            <person name="Tan Y."/>
            <person name="Ye H."/>
            <person name="Costa R.H."/>
        </authorList>
    </citation>
    <scope>INDUCTION</scope>
</reference>
<reference key="7">
    <citation type="journal article" date="2003" name="J. Biol. Chem.">
        <title>Ubiquitous expression of the forkhead box M1B transgene accelerates proliferation of distinct pulmonary cell types following lung injury.</title>
        <authorList>
            <person name="Kalinichenko V.V."/>
            <person name="Gusarova G.A."/>
            <person name="Tan Y."/>
            <person name="Wang I.C."/>
            <person name="Major M.L."/>
            <person name="Wang X."/>
            <person name="Yoder H.M."/>
            <person name="Costa R.H."/>
        </authorList>
    </citation>
    <scope>INDUCTION</scope>
</reference>
<reference key="8">
    <citation type="journal article" date="2004" name="Mol. Cell. Biol.">
        <title>Cyclin F disruption compromises placental development and affects normal cell cycle execution.</title>
        <authorList>
            <person name="Tetzlaff M.T."/>
            <person name="Bai C."/>
            <person name="Finegold M."/>
            <person name="Wilson J."/>
            <person name="Harper J.W."/>
            <person name="Mahon K.A."/>
            <person name="Elledge S.J."/>
        </authorList>
    </citation>
    <scope>DISRUPTION PHENOTYPE</scope>
</reference>
<gene>
    <name type="primary">Ccnf</name>
</gene>
<comment type="function">
    <text evidence="1">Substrate recognition component of a SCF (SKP1-CUL1-F-box protein) E3 ubiquitin-protein ligase complex which mediates the ubiquitination and subsequent proteasomal degradation of target proteins (By similarity). The SCF(CCNF) E3 ubiquitin-protein ligase complex is an integral component of the ubiquitin proteasome system (UPS) and links proteasome degradation to the cell cycle (By similarity). Mediates the substrate recognition and the proteasomal degradation of various target proteins involved in the regulation of cell cycle progression and in the maintenance of genome stability (By similarity). Mediates the ubiquitination and subsequent proteasomal degradation of CP110 during G2 phase, thereby acting as an inhibitor of centrosome reduplication (By similarity). In G2, mediates the ubiquitination and proteasomal degradation of CDC6, thereby suppressing DNA re-replication and preventing genome instability (By similarity). Involved in the ubiquitination and degradation of the substrate adapter CDH1 of the anaphase-promoting complex (APC/C), thereby acting as an antagonist of APC/C in regulating G1 progression and S phase entry (By similarity). May play a role in the G2 cell cycle checkpoint control after DNA damage, possibly by promoting the ubiquitination of MYBL2/BMYB (By similarity).</text>
</comment>
<comment type="subunit">
    <text evidence="1">Component of the SCF(CCNF) complex consisting of CUL1, RBX1, SKP1 and CCNF (By similarity). Interacts with SKP1 (By similarity). Interacts with CUL1 (By similarity). Interacts with CCNB1; interaction is required for nuclear localization of CCNB1 (By similarity). Interacts with CCP110; this interaction leads to CCP110 ubiquitination and degradation via the proteasome pathway (By similarity). Interacts (via the Cyclin N-terminal domain) with MYBL2/BMYB (By similarity). Interacts with FZR1/CDH1 (via N-terminus) (By similarity). Interacts with RRM2 (via Cy motif and when phosphorylated at 'Thr-33'); the interaction occurs exclusively in G2 and early M (By similarity). Interacts with CDC6 (via Cy motif); the interaction takes place during G2 and M phase (By similarity).</text>
</comment>
<comment type="subcellular location">
    <subcellularLocation>
        <location evidence="1">Nucleus</location>
    </subcellularLocation>
    <subcellularLocation>
        <location evidence="1">Cytoplasm</location>
        <location evidence="1">Perinuclear region</location>
    </subcellularLocation>
    <subcellularLocation>
        <location evidence="1">Cytoplasm</location>
        <location evidence="1">Cytoskeleton</location>
        <location evidence="1">Microtubule organizing center</location>
        <location evidence="1">Centrosome</location>
        <location evidence="1">Centriole</location>
    </subcellularLocation>
    <text evidence="1">Localization in the centrosome is rare in S phase cells and increases in G2 cells, Localizes on both the mother and daughter centrioles. Localization to centrosomes is not dependent on CP110. Localizes to the nucleus in G2 phase.</text>
</comment>
<comment type="alternative products">
    <event type="alternative splicing"/>
    <isoform>
        <id>P51944-1</id>
        <name>1</name>
        <name>Short</name>
        <sequence type="displayed"/>
    </isoform>
    <isoform>
        <id>P51944-2</id>
        <name>2</name>
        <name>Long</name>
        <sequence type="described" ref="VSP_001257"/>
    </isoform>
    <isoform>
        <id>P51944-3</id>
        <name>3</name>
        <sequence type="described" ref="VSP_039778"/>
    </isoform>
</comment>
<comment type="induction">
    <text evidence="5 6">Expression is activated by the FOXM1 transcription factor.</text>
</comment>
<comment type="domain">
    <text evidence="1">The nuclear localization signals mediate the localization to the nucleus and are required for CCNB1 localization to the nucleus.</text>
</comment>
<comment type="domain">
    <text evidence="1">The D box motifs 1-4 (amino acid sequence RxxL) are involved in substrate binding, such as FZR1/CDH1, and may be ubiquitinated.</text>
</comment>
<comment type="PTM">
    <text evidence="1">Degraded when the spindle assembly checkpoint is activated during the G2-M transition. Degradation is not dependent on the proteasome or ubiquitin and depends on the C-terminal PEST sequence.</text>
</comment>
<comment type="PTM">
    <text evidence="1">Phosphorylated just before cells enter into mitosis.</text>
</comment>
<comment type="PTM">
    <text evidence="1">Ubiquitinated by the anaphase-promoting complex (APC/C); leading to its degradation by the proteasome.</text>
</comment>
<comment type="disruption phenotype">
    <text evidence="7">Death by 10.5 dpc, with many developmental anomalies due in part to failures in yolk sac and chorioallantoic placentation. Heterozygous mice are normal and fertile.</text>
</comment>
<comment type="similarity">
    <text evidence="10">Belongs to the cyclin family. Cyclin AB subfamily.</text>
</comment>
<accession>P51944</accession>
<accession>Q3TF73</accession>
<accession>Q60797</accession>
<accession>Q60799</accession>
<accession>Q8BSX9</accession>
<accession>Q8C4D9</accession>
<accession>Q8CI26</accession>
<organism>
    <name type="scientific">Mus musculus</name>
    <name type="common">Mouse</name>
    <dbReference type="NCBI Taxonomy" id="10090"/>
    <lineage>
        <taxon>Eukaryota</taxon>
        <taxon>Metazoa</taxon>
        <taxon>Chordata</taxon>
        <taxon>Craniata</taxon>
        <taxon>Vertebrata</taxon>
        <taxon>Euteleostomi</taxon>
        <taxon>Mammalia</taxon>
        <taxon>Eutheria</taxon>
        <taxon>Euarchontoglires</taxon>
        <taxon>Glires</taxon>
        <taxon>Rodentia</taxon>
        <taxon>Myomorpha</taxon>
        <taxon>Muroidea</taxon>
        <taxon>Muridae</taxon>
        <taxon>Murinae</taxon>
        <taxon>Mus</taxon>
        <taxon>Mus</taxon>
    </lineage>
</organism>
<keyword id="KW-0025">Alternative splicing</keyword>
<keyword id="KW-0131">Cell cycle</keyword>
<keyword id="KW-0132">Cell division</keyword>
<keyword id="KW-0195">Cyclin</keyword>
<keyword id="KW-0963">Cytoplasm</keyword>
<keyword id="KW-0206">Cytoskeleton</keyword>
<keyword id="KW-0498">Mitosis</keyword>
<keyword id="KW-0539">Nucleus</keyword>
<keyword id="KW-0597">Phosphoprotein</keyword>
<keyword id="KW-1185">Reference proteome</keyword>
<keyword id="KW-0832">Ubl conjugation</keyword>
<keyword id="KW-0833">Ubl conjugation pathway</keyword>
<evidence type="ECO:0000250" key="1">
    <source>
        <dbReference type="UniProtKB" id="P41002"/>
    </source>
</evidence>
<evidence type="ECO:0000255" key="2"/>
<evidence type="ECO:0000255" key="3">
    <source>
        <dbReference type="PROSITE-ProRule" id="PRU00080"/>
    </source>
</evidence>
<evidence type="ECO:0000256" key="4">
    <source>
        <dbReference type="SAM" id="MobiDB-lite"/>
    </source>
</evidence>
<evidence type="ECO:0000269" key="5">
    <source>
    </source>
</evidence>
<evidence type="ECO:0000269" key="6">
    <source>
    </source>
</evidence>
<evidence type="ECO:0000269" key="7">
    <source>
    </source>
</evidence>
<evidence type="ECO:0000303" key="8">
    <source>
    </source>
</evidence>
<evidence type="ECO:0000303" key="9">
    <source ref="2"/>
</evidence>
<evidence type="ECO:0000305" key="10"/>
<dbReference type="EMBL" id="Z47766">
    <property type="protein sequence ID" value="CAA87695.1"/>
    <property type="molecule type" value="mRNA"/>
</dbReference>
<dbReference type="EMBL" id="U20612">
    <property type="protein sequence ID" value="AAA62317.1"/>
    <property type="molecule type" value="mRNA"/>
</dbReference>
<dbReference type="EMBL" id="U20636">
    <property type="protein sequence ID" value="AAA63152.1"/>
    <property type="molecule type" value="mRNA"/>
</dbReference>
<dbReference type="EMBL" id="AK030298">
    <property type="protein sequence ID" value="BAC26886.1"/>
    <property type="molecule type" value="mRNA"/>
</dbReference>
<dbReference type="EMBL" id="AK082485">
    <property type="protein sequence ID" value="BAC38507.1"/>
    <property type="molecule type" value="mRNA"/>
</dbReference>
<dbReference type="EMBL" id="AK159594">
    <property type="protein sequence ID" value="BAE35214.1"/>
    <property type="molecule type" value="mRNA"/>
</dbReference>
<dbReference type="EMBL" id="AK169263">
    <property type="protein sequence ID" value="BAE41025.1"/>
    <property type="molecule type" value="mRNA"/>
</dbReference>
<dbReference type="EMBL" id="AC117577">
    <property type="status" value="NOT_ANNOTATED_CDS"/>
    <property type="molecule type" value="Genomic_DNA"/>
</dbReference>
<dbReference type="EMBL" id="BC037662">
    <property type="protein sequence ID" value="AAH37662.1"/>
    <property type="molecule type" value="mRNA"/>
</dbReference>
<dbReference type="CCDS" id="CCDS37484.1">
    <molecule id="P51944-1"/>
</dbReference>
<dbReference type="PIR" id="I48317">
    <property type="entry name" value="I48317"/>
</dbReference>
<dbReference type="RefSeq" id="NP_001396733.1">
    <molecule id="P51944-3"/>
    <property type="nucleotide sequence ID" value="NM_001409804.1"/>
</dbReference>
<dbReference type="RefSeq" id="NP_031660.3">
    <molecule id="P51944-1"/>
    <property type="nucleotide sequence ID" value="NM_007634.4"/>
</dbReference>
<dbReference type="SMR" id="P51944"/>
<dbReference type="BioGRID" id="198554">
    <property type="interactions" value="5"/>
</dbReference>
<dbReference type="FunCoup" id="P51944">
    <property type="interactions" value="685"/>
</dbReference>
<dbReference type="STRING" id="10090.ENSMUSP00000111048"/>
<dbReference type="iPTMnet" id="P51944"/>
<dbReference type="PhosphoSitePlus" id="P51944"/>
<dbReference type="PaxDb" id="10090-ENSMUSP00000111048"/>
<dbReference type="ProteomicsDB" id="280013">
    <molecule id="P51944-1"/>
</dbReference>
<dbReference type="ProteomicsDB" id="280014">
    <molecule id="P51944-2"/>
</dbReference>
<dbReference type="ProteomicsDB" id="280015">
    <molecule id="P51944-3"/>
</dbReference>
<dbReference type="Antibodypedia" id="10421">
    <property type="antibodies" value="220 antibodies from 33 providers"/>
</dbReference>
<dbReference type="DNASU" id="12449"/>
<dbReference type="Ensembl" id="ENSMUST00000115390.5">
    <molecule id="P51944-1"/>
    <property type="protein sequence ID" value="ENSMUSP00000111048.4"/>
    <property type="gene ID" value="ENSMUSG00000072082.8"/>
</dbReference>
<dbReference type="GeneID" id="12449"/>
<dbReference type="KEGG" id="mmu:12449"/>
<dbReference type="UCSC" id="uc008ave.1">
    <molecule id="P51944-1"/>
    <property type="organism name" value="mouse"/>
</dbReference>
<dbReference type="UCSC" id="uc008avg.1">
    <molecule id="P51944-3"/>
    <property type="organism name" value="mouse"/>
</dbReference>
<dbReference type="AGR" id="MGI:102551"/>
<dbReference type="CTD" id="899"/>
<dbReference type="MGI" id="MGI:102551">
    <property type="gene designation" value="Ccnf"/>
</dbReference>
<dbReference type="VEuPathDB" id="HostDB:ENSMUSG00000072082"/>
<dbReference type="eggNOG" id="KOG0654">
    <property type="taxonomic scope" value="Eukaryota"/>
</dbReference>
<dbReference type="GeneTree" id="ENSGT00810000125541"/>
<dbReference type="HOGENOM" id="CLU_020348_0_0_1"/>
<dbReference type="InParanoid" id="P51944"/>
<dbReference type="OMA" id="HQAKKSC"/>
<dbReference type="OrthoDB" id="5590282at2759"/>
<dbReference type="PhylomeDB" id="P51944"/>
<dbReference type="TreeFam" id="TF101006"/>
<dbReference type="Reactome" id="R-MMU-8951664">
    <property type="pathway name" value="Neddylation"/>
</dbReference>
<dbReference type="Reactome" id="R-MMU-983168">
    <property type="pathway name" value="Antigen processing: Ubiquitination &amp; Proteasome degradation"/>
</dbReference>
<dbReference type="BioGRID-ORCS" id="12449">
    <property type="hits" value="28 hits in 78 CRISPR screens"/>
</dbReference>
<dbReference type="ChiTaRS" id="Ccnf">
    <property type="organism name" value="mouse"/>
</dbReference>
<dbReference type="PRO" id="PR:P51944"/>
<dbReference type="Proteomes" id="UP000000589">
    <property type="component" value="Chromosome 17"/>
</dbReference>
<dbReference type="RNAct" id="P51944">
    <property type="molecule type" value="protein"/>
</dbReference>
<dbReference type="Bgee" id="ENSMUSG00000072082">
    <property type="expression patterns" value="Expressed in ectoplacental cone and 157 other cell types or tissues"/>
</dbReference>
<dbReference type="ExpressionAtlas" id="P51944">
    <property type="expression patterns" value="baseline and differential"/>
</dbReference>
<dbReference type="GO" id="GO:0005814">
    <property type="term" value="C:centriole"/>
    <property type="evidence" value="ECO:0000250"/>
    <property type="project" value="UniProtKB"/>
</dbReference>
<dbReference type="GO" id="GO:0005813">
    <property type="term" value="C:centrosome"/>
    <property type="evidence" value="ECO:0007669"/>
    <property type="project" value="Ensembl"/>
</dbReference>
<dbReference type="GO" id="GO:0005654">
    <property type="term" value="C:nucleoplasm"/>
    <property type="evidence" value="ECO:0007669"/>
    <property type="project" value="Ensembl"/>
</dbReference>
<dbReference type="GO" id="GO:0005634">
    <property type="term" value="C:nucleus"/>
    <property type="evidence" value="ECO:0000250"/>
    <property type="project" value="UniProtKB"/>
</dbReference>
<dbReference type="GO" id="GO:0048471">
    <property type="term" value="C:perinuclear region of cytoplasm"/>
    <property type="evidence" value="ECO:0007669"/>
    <property type="project" value="UniProtKB-SubCell"/>
</dbReference>
<dbReference type="GO" id="GO:0019005">
    <property type="term" value="C:SCF ubiquitin ligase complex"/>
    <property type="evidence" value="ECO:0000250"/>
    <property type="project" value="UniProtKB"/>
</dbReference>
<dbReference type="GO" id="GO:0010997">
    <property type="term" value="F:anaphase-promoting complex binding"/>
    <property type="evidence" value="ECO:0007669"/>
    <property type="project" value="Ensembl"/>
</dbReference>
<dbReference type="GO" id="GO:0051301">
    <property type="term" value="P:cell division"/>
    <property type="evidence" value="ECO:0007669"/>
    <property type="project" value="UniProtKB-KW"/>
</dbReference>
<dbReference type="GO" id="GO:0010826">
    <property type="term" value="P:negative regulation of centrosome duplication"/>
    <property type="evidence" value="ECO:0000315"/>
    <property type="project" value="MGI"/>
</dbReference>
<dbReference type="GO" id="GO:0001890">
    <property type="term" value="P:placenta development"/>
    <property type="evidence" value="ECO:0000315"/>
    <property type="project" value="MGI"/>
</dbReference>
<dbReference type="GO" id="GO:0016567">
    <property type="term" value="P:protein ubiquitination"/>
    <property type="evidence" value="ECO:0000250"/>
    <property type="project" value="UniProtKB"/>
</dbReference>
<dbReference type="GO" id="GO:0000320">
    <property type="term" value="P:re-entry into mitotic cell cycle"/>
    <property type="evidence" value="ECO:0000315"/>
    <property type="project" value="MGI"/>
</dbReference>
<dbReference type="GO" id="GO:0051726">
    <property type="term" value="P:regulation of cell cycle"/>
    <property type="evidence" value="ECO:0000250"/>
    <property type="project" value="UniProtKB"/>
</dbReference>
<dbReference type="GO" id="GO:0031146">
    <property type="term" value="P:SCF-dependent proteasomal ubiquitin-dependent protein catabolic process"/>
    <property type="evidence" value="ECO:0000250"/>
    <property type="project" value="UniProtKB"/>
</dbReference>
<dbReference type="CDD" id="cd20521">
    <property type="entry name" value="CYCLIN_CCNF_rpt1"/>
    <property type="match status" value="1"/>
</dbReference>
<dbReference type="CDD" id="cd22082">
    <property type="entry name" value="F-box_FBXO1"/>
    <property type="match status" value="1"/>
</dbReference>
<dbReference type="FunFam" id="1.10.472.10:FF:000038">
    <property type="entry name" value="Cyclin F"/>
    <property type="match status" value="1"/>
</dbReference>
<dbReference type="FunFam" id="1.10.472.10:FF:000055">
    <property type="entry name" value="Cyclin F"/>
    <property type="match status" value="1"/>
</dbReference>
<dbReference type="Gene3D" id="1.10.472.10">
    <property type="entry name" value="Cyclin-like"/>
    <property type="match status" value="2"/>
</dbReference>
<dbReference type="Gene3D" id="1.25.40.10">
    <property type="entry name" value="Tetratricopeptide repeat domain"/>
    <property type="match status" value="1"/>
</dbReference>
<dbReference type="InterPro" id="IPR039361">
    <property type="entry name" value="Cyclin"/>
</dbReference>
<dbReference type="InterPro" id="IPR013763">
    <property type="entry name" value="Cyclin-like_dom"/>
</dbReference>
<dbReference type="InterPro" id="IPR036915">
    <property type="entry name" value="Cyclin-like_sf"/>
</dbReference>
<dbReference type="InterPro" id="IPR004367">
    <property type="entry name" value="Cyclin_C-dom"/>
</dbReference>
<dbReference type="InterPro" id="IPR006671">
    <property type="entry name" value="Cyclin_N"/>
</dbReference>
<dbReference type="InterPro" id="IPR048258">
    <property type="entry name" value="Cyclins_cyclin-box"/>
</dbReference>
<dbReference type="InterPro" id="IPR036047">
    <property type="entry name" value="F-box-like_dom_sf"/>
</dbReference>
<dbReference type="InterPro" id="IPR001810">
    <property type="entry name" value="F-box_dom"/>
</dbReference>
<dbReference type="InterPro" id="IPR011990">
    <property type="entry name" value="TPR-like_helical_dom_sf"/>
</dbReference>
<dbReference type="PANTHER" id="PTHR10177">
    <property type="entry name" value="CYCLINS"/>
    <property type="match status" value="1"/>
</dbReference>
<dbReference type="Pfam" id="PF02984">
    <property type="entry name" value="Cyclin_C"/>
    <property type="match status" value="1"/>
</dbReference>
<dbReference type="Pfam" id="PF00134">
    <property type="entry name" value="Cyclin_N"/>
    <property type="match status" value="1"/>
</dbReference>
<dbReference type="Pfam" id="PF12937">
    <property type="entry name" value="F-box-like"/>
    <property type="match status" value="1"/>
</dbReference>
<dbReference type="SMART" id="SM00385">
    <property type="entry name" value="CYCLIN"/>
    <property type="match status" value="2"/>
</dbReference>
<dbReference type="SMART" id="SM01332">
    <property type="entry name" value="Cyclin_C"/>
    <property type="match status" value="1"/>
</dbReference>
<dbReference type="SMART" id="SM00256">
    <property type="entry name" value="FBOX"/>
    <property type="match status" value="1"/>
</dbReference>
<dbReference type="SUPFAM" id="SSF47954">
    <property type="entry name" value="Cyclin-like"/>
    <property type="match status" value="2"/>
</dbReference>
<dbReference type="SUPFAM" id="SSF81383">
    <property type="entry name" value="F-box domain"/>
    <property type="match status" value="1"/>
</dbReference>
<dbReference type="PROSITE" id="PS00292">
    <property type="entry name" value="CYCLINS"/>
    <property type="match status" value="1"/>
</dbReference>
<dbReference type="PROSITE" id="PS50181">
    <property type="entry name" value="FBOX"/>
    <property type="match status" value="1"/>
</dbReference>
<proteinExistence type="evidence at transcript level"/>
<protein>
    <recommendedName>
        <fullName>Cyclin-F</fullName>
    </recommendedName>
</protein>